<sequence length="169" mass="19485">MSSIQKKCLICCNIGEEELLQACDCPSRVHHTCLQSHIQCFKSSHCTFCEKKYKIMVMCNSLKKCSSPVLEQANWIVLCVCVSTLLCILCILLDICLTIRLWQSSVLCYEVYNTFYFLVLCGTFSIAFYLAAWYDIFFEFHSLCSFIWNLKKISQSYPCEASKNALKIL</sequence>
<organism>
    <name type="scientific">Saimiriine herpesvirus 2 (strain 11)</name>
    <name type="common">SaHV-2</name>
    <name type="synonym">Herpesvirus saimiri</name>
    <dbReference type="NCBI Taxonomy" id="10383"/>
    <lineage>
        <taxon>Viruses</taxon>
        <taxon>Duplodnaviria</taxon>
        <taxon>Heunggongvirae</taxon>
        <taxon>Peploviricota</taxon>
        <taxon>Herviviricetes</taxon>
        <taxon>Herpesvirales</taxon>
        <taxon>Orthoherpesviridae</taxon>
        <taxon>Gammaherpesvirinae</taxon>
        <taxon>Rhadinovirus</taxon>
        <taxon>Rhadinovirus saimiriinegamma2</taxon>
        <taxon>Saimiriine herpesvirus 2</taxon>
    </lineage>
</organism>
<name>VG12_SHV21</name>
<accession>P24915</accession>
<proteinExistence type="predicted"/>
<feature type="chain" id="PRO_0000116343" description="Uncharacterized gene 12 protein">
    <location>
        <begin position="1"/>
        <end position="169"/>
    </location>
</feature>
<organismHost>
    <name type="scientific">Saimiri sciureus</name>
    <name type="common">Common squirrel monkey</name>
    <dbReference type="NCBI Taxonomy" id="9521"/>
</organismHost>
<gene>
    <name type="primary">12</name>
    <name type="synonym">KCLF1</name>
</gene>
<keyword id="KW-1185">Reference proteome</keyword>
<dbReference type="EMBL" id="X64346">
    <property type="protein sequence ID" value="CAA45635.1"/>
    <property type="molecule type" value="Genomic_DNA"/>
</dbReference>
<dbReference type="EMBL" id="M31122">
    <property type="protein sequence ID" value="AAA46168.1"/>
    <property type="molecule type" value="Genomic_DNA"/>
</dbReference>
<dbReference type="RefSeq" id="NP_040214.1">
    <property type="nucleotide sequence ID" value="NC_001350.1"/>
</dbReference>
<dbReference type="SMR" id="P24915"/>
<dbReference type="KEGG" id="vg:1682505"/>
<dbReference type="Proteomes" id="UP000000587">
    <property type="component" value="Segment"/>
</dbReference>
<protein>
    <recommendedName>
        <fullName>Uncharacterized gene 12 protein</fullName>
    </recommendedName>
</protein>
<reference key="1">
    <citation type="journal article" date="1990" name="Virology">
        <title>Structural organization of the conserved gene block of Herpesvirus saimiri coding for DNA polymerase, glycoprotein B, and major DNA binding protein.</title>
        <authorList>
            <person name="Albrecht J.-C."/>
            <person name="Fleckenstein B."/>
        </authorList>
    </citation>
    <scope>NUCLEOTIDE SEQUENCE [GENOMIC DNA]</scope>
</reference>
<reference key="2">
    <citation type="journal article" date="1992" name="J. Virol.">
        <title>Primary structure of the herpesvirus saimiri genome.</title>
        <authorList>
            <person name="Albrecht J.-C."/>
            <person name="Nicholas J."/>
            <person name="Biller D."/>
            <person name="Cameron K.R."/>
            <person name="Biesinger B."/>
            <person name="Newman C."/>
            <person name="Wittmann S."/>
            <person name="Craxton M.A."/>
            <person name="Coleman H."/>
            <person name="Fleckenstein B."/>
            <person name="Honess R.W."/>
        </authorList>
    </citation>
    <scope>NUCLEOTIDE SEQUENCE [LARGE SCALE GENOMIC DNA]</scope>
</reference>